<gene>
    <name type="primary">clpB</name>
    <name type="ordered locus">LL1525</name>
    <name type="ORF">L166407</name>
</gene>
<evidence type="ECO:0000250" key="1"/>
<evidence type="ECO:0000255" key="2">
    <source>
        <dbReference type="PROSITE-ProRule" id="PRU01251"/>
    </source>
</evidence>
<evidence type="ECO:0000305" key="3"/>
<reference key="1">
    <citation type="journal article" date="2001" name="Genome Res.">
        <title>The complete genome sequence of the lactic acid bacterium Lactococcus lactis ssp. lactis IL1403.</title>
        <authorList>
            <person name="Bolotin A."/>
            <person name="Wincker P."/>
            <person name="Mauger S."/>
            <person name="Jaillon O."/>
            <person name="Malarme K."/>
            <person name="Weissenbach J."/>
            <person name="Ehrlich S.D."/>
            <person name="Sorokin A."/>
        </authorList>
    </citation>
    <scope>NUCLEOTIDE SEQUENCE [LARGE SCALE GENOMIC DNA]</scope>
    <source>
        <strain>IL1403</strain>
    </source>
</reference>
<comment type="function">
    <text evidence="1">Part of a stress-induced multi-chaperone system, it is involved in the recovery of the cell from heat-induced damage, in cooperation with DnaK, DnaJ and GrpE. Acts before DnaK, in the processing of protein aggregates. Protein binding stimulates the ATPase activity; ATP hydrolysis unfolds the denatured protein aggregates, which probably helps expose new hydrophobic binding sites on the surface of ClpB-bound aggregates, contributing to the solubilization and refolding of denatured protein aggregates by DnaK (By similarity).</text>
</comment>
<comment type="subunit">
    <text evidence="1">Homohexamer. The oligomerization is ATP-dependent (By similarity).</text>
</comment>
<comment type="subcellular location">
    <subcellularLocation>
        <location evidence="3">Cytoplasm</location>
    </subcellularLocation>
</comment>
<comment type="domain">
    <text evidence="1">The Clp repeat (R) domain probably functions as a substrate-discriminating domain, recruiting aggregated proteins to the ClpB hexamer and/or stabilizing bound proteins. The NBD2 domain is responsible for oligomerization, whereas the NBD1 domain stabilizes the hexamer probably in an ATP-dependent manner. The movement of the coiled-coil domain is essential for ClpB ability to rescue proteins from an aggregated state, probably by pulling apart large aggregated proteins, which are bound between the coiled-coils motifs of adjacent ClpB subunits in the functional hexamer (By similarity).</text>
</comment>
<comment type="similarity">
    <text evidence="3">Belongs to the ClpA/ClpB family.</text>
</comment>
<sequence>MDIEKMTTTMQEALGSAQQIAQVRHHQVIEVPHLWRIFVQPNSFGANFYKDLGIDLDDYTNLIEKEIDKINSVEGSNITYGQNLSPDLFQIFTEADKIAQKMGDEYLSTEIILLALFELKQNPLTSYLVSHGLTKAKAQAAIEKLRGGDKVTSQNAEETYKALEKYGVDLVAQVKSGKQDPVIGRDEEIRDVIRVLSRKTKNNPVLIGEPGVGKTAIVEGLAQRIVRKDVPENLKDKTIFSLDMGALIAGAKYRGEFEERLKAVLNEVKKSDGQIILFIDELHTIVGAGKTEGSMDAGNLLKPMLARGELHLIGATTLDEYRKYMETDKALERRFQKVLVTEPTVEDTISILRGLKERFEIHHGVTIHDNALVAAATLSNRYITDRFLPDKAIDLVDEASATIRVEMNSLPTELDQANRRLMQLEIEEAALKKERDDASKKRLEIIRGEIAELREENNQLKAQWEAEKKEVGNISEKRNELEHARHELEEAQNEGNLEKAAALRYGKIPEIEKELKAIEEKAKSDDLSLVQESVTEEQITEVVGRMTGIPITKLVEGEREKLLHLPETLHQRVVGQDEAVEAVSDAIIRARAGIQDPNRPLGSFLFLGPTGVGKTELAKALAENLFDSEEHMVRIDMSEYMEKHSVSRLVGAPPGYVGYDEGGQLTEAVRRNPYTIILLDEIEKAHPDVFNILLQVLDDGRLTDSKGVLVDFKNTVLIMTSNVGSQYLLDNVGENGEISEETTENVMSQLRAHFKPEFLNRIDDTILFKPLALEDIKNIIVKMTSQLSHRLEEMDVQLELSEEVKVWIAENAYEPAYGARPLKRYLTKVIENPLAKLIIGGKIPPKSKVIVTLVENKIDFDIQTIAE</sequence>
<keyword id="KW-0067">ATP-binding</keyword>
<keyword id="KW-0143">Chaperone</keyword>
<keyword id="KW-0175">Coiled coil</keyword>
<keyword id="KW-0963">Cytoplasm</keyword>
<keyword id="KW-0547">Nucleotide-binding</keyword>
<keyword id="KW-1185">Reference proteome</keyword>
<keyword id="KW-0677">Repeat</keyword>
<keyword id="KW-0346">Stress response</keyword>
<accession>Q9CFF3</accession>
<name>CLPB_LACLA</name>
<proteinExistence type="inferred from homology"/>
<protein>
    <recommendedName>
        <fullName>Chaperone protein ClpB</fullName>
    </recommendedName>
</protein>
<organism>
    <name type="scientific">Lactococcus lactis subsp. lactis (strain IL1403)</name>
    <name type="common">Streptococcus lactis</name>
    <dbReference type="NCBI Taxonomy" id="272623"/>
    <lineage>
        <taxon>Bacteria</taxon>
        <taxon>Bacillati</taxon>
        <taxon>Bacillota</taxon>
        <taxon>Bacilli</taxon>
        <taxon>Lactobacillales</taxon>
        <taxon>Streptococcaceae</taxon>
        <taxon>Lactococcus</taxon>
    </lineage>
</organism>
<feature type="chain" id="PRO_0000191131" description="Chaperone protein ClpB">
    <location>
        <begin position="1"/>
        <end position="867"/>
    </location>
</feature>
<feature type="domain" description="Clp R" evidence="2">
    <location>
        <begin position="3"/>
        <end position="148"/>
    </location>
</feature>
<feature type="region of interest" description="Repeat 1" evidence="2">
    <location>
        <begin position="6"/>
        <end position="70"/>
    </location>
</feature>
<feature type="region of interest" description="Repeat 2" evidence="2">
    <location>
        <begin position="84"/>
        <end position="148"/>
    </location>
</feature>
<feature type="region of interest" description="NBD1" evidence="1">
    <location>
        <begin position="161"/>
        <end position="342"/>
    </location>
</feature>
<feature type="region of interest" description="Linker" evidence="1">
    <location>
        <begin position="343"/>
        <end position="548"/>
    </location>
</feature>
<feature type="region of interest" description="NBD2" evidence="1">
    <location>
        <begin position="558"/>
        <end position="770"/>
    </location>
</feature>
<feature type="region of interest" description="C-terminal" evidence="1">
    <location>
        <begin position="771"/>
        <end position="867"/>
    </location>
</feature>
<feature type="coiled-coil region" evidence="1">
    <location>
        <begin position="393"/>
        <end position="527"/>
    </location>
</feature>
<feature type="binding site" evidence="1">
    <location>
        <begin position="208"/>
        <end position="215"/>
    </location>
    <ligand>
        <name>ATP</name>
        <dbReference type="ChEBI" id="CHEBI:30616"/>
        <label>1</label>
    </ligand>
</feature>
<feature type="binding site" evidence="1">
    <location>
        <begin position="608"/>
        <end position="615"/>
    </location>
    <ligand>
        <name>ATP</name>
        <dbReference type="ChEBI" id="CHEBI:30616"/>
        <label>2</label>
    </ligand>
</feature>
<dbReference type="EMBL" id="AE005176">
    <property type="protein sequence ID" value="AAK05623.1"/>
    <property type="molecule type" value="Genomic_DNA"/>
</dbReference>
<dbReference type="PIR" id="E86815">
    <property type="entry name" value="E86815"/>
</dbReference>
<dbReference type="RefSeq" id="NP_267681.1">
    <property type="nucleotide sequence ID" value="NC_002662.1"/>
</dbReference>
<dbReference type="RefSeq" id="WP_003130040.1">
    <property type="nucleotide sequence ID" value="NC_002662.1"/>
</dbReference>
<dbReference type="SMR" id="Q9CFF3"/>
<dbReference type="PaxDb" id="272623-L166407"/>
<dbReference type="EnsemblBacteria" id="AAK05623">
    <property type="protein sequence ID" value="AAK05623"/>
    <property type="gene ID" value="L166407"/>
</dbReference>
<dbReference type="KEGG" id="lla:L166407"/>
<dbReference type="PATRIC" id="fig|272623.7.peg.1636"/>
<dbReference type="eggNOG" id="COG0542">
    <property type="taxonomic scope" value="Bacteria"/>
</dbReference>
<dbReference type="HOGENOM" id="CLU_005070_4_2_9"/>
<dbReference type="OrthoDB" id="9803641at2"/>
<dbReference type="Proteomes" id="UP000002196">
    <property type="component" value="Chromosome"/>
</dbReference>
<dbReference type="GO" id="GO:0005737">
    <property type="term" value="C:cytoplasm"/>
    <property type="evidence" value="ECO:0007669"/>
    <property type="project" value="UniProtKB-SubCell"/>
</dbReference>
<dbReference type="GO" id="GO:0005524">
    <property type="term" value="F:ATP binding"/>
    <property type="evidence" value="ECO:0007669"/>
    <property type="project" value="UniProtKB-KW"/>
</dbReference>
<dbReference type="GO" id="GO:0016887">
    <property type="term" value="F:ATP hydrolysis activity"/>
    <property type="evidence" value="ECO:0007669"/>
    <property type="project" value="InterPro"/>
</dbReference>
<dbReference type="GO" id="GO:0034605">
    <property type="term" value="P:cellular response to heat"/>
    <property type="evidence" value="ECO:0007669"/>
    <property type="project" value="TreeGrafter"/>
</dbReference>
<dbReference type="GO" id="GO:0042026">
    <property type="term" value="P:protein refolding"/>
    <property type="evidence" value="ECO:0007669"/>
    <property type="project" value="InterPro"/>
</dbReference>
<dbReference type="CDD" id="cd00009">
    <property type="entry name" value="AAA"/>
    <property type="match status" value="1"/>
</dbReference>
<dbReference type="CDD" id="cd19499">
    <property type="entry name" value="RecA-like_ClpB_Hsp104-like"/>
    <property type="match status" value="1"/>
</dbReference>
<dbReference type="FunFam" id="3.40.50.300:FF:000120">
    <property type="entry name" value="ATP-dependent chaperone ClpB"/>
    <property type="match status" value="1"/>
</dbReference>
<dbReference type="FunFam" id="3.40.50.300:FF:000025">
    <property type="entry name" value="ATP-dependent Clp protease subunit"/>
    <property type="match status" value="1"/>
</dbReference>
<dbReference type="FunFam" id="3.40.50.300:FF:000010">
    <property type="entry name" value="Chaperone clpB 1, putative"/>
    <property type="match status" value="1"/>
</dbReference>
<dbReference type="Gene3D" id="1.10.8.60">
    <property type="match status" value="1"/>
</dbReference>
<dbReference type="Gene3D" id="1.10.1780.10">
    <property type="entry name" value="Clp, N-terminal domain"/>
    <property type="match status" value="1"/>
</dbReference>
<dbReference type="Gene3D" id="3.40.50.300">
    <property type="entry name" value="P-loop containing nucleotide triphosphate hydrolases"/>
    <property type="match status" value="3"/>
</dbReference>
<dbReference type="InterPro" id="IPR003593">
    <property type="entry name" value="AAA+_ATPase"/>
</dbReference>
<dbReference type="InterPro" id="IPR003959">
    <property type="entry name" value="ATPase_AAA_core"/>
</dbReference>
<dbReference type="InterPro" id="IPR017730">
    <property type="entry name" value="Chaperonin_ClpB"/>
</dbReference>
<dbReference type="InterPro" id="IPR019489">
    <property type="entry name" value="Clp_ATPase_C"/>
</dbReference>
<dbReference type="InterPro" id="IPR036628">
    <property type="entry name" value="Clp_N_dom_sf"/>
</dbReference>
<dbReference type="InterPro" id="IPR004176">
    <property type="entry name" value="Clp_R_dom"/>
</dbReference>
<dbReference type="InterPro" id="IPR001270">
    <property type="entry name" value="ClpA/B"/>
</dbReference>
<dbReference type="InterPro" id="IPR018368">
    <property type="entry name" value="ClpA/B_CS1"/>
</dbReference>
<dbReference type="InterPro" id="IPR028299">
    <property type="entry name" value="ClpA/B_CS2"/>
</dbReference>
<dbReference type="InterPro" id="IPR041546">
    <property type="entry name" value="ClpA/ClpB_AAA_lid"/>
</dbReference>
<dbReference type="InterPro" id="IPR050130">
    <property type="entry name" value="ClpA_ClpB"/>
</dbReference>
<dbReference type="InterPro" id="IPR027417">
    <property type="entry name" value="P-loop_NTPase"/>
</dbReference>
<dbReference type="NCBIfam" id="TIGR03346">
    <property type="entry name" value="chaperone_ClpB"/>
    <property type="match status" value="1"/>
</dbReference>
<dbReference type="PANTHER" id="PTHR11638">
    <property type="entry name" value="ATP-DEPENDENT CLP PROTEASE"/>
    <property type="match status" value="1"/>
</dbReference>
<dbReference type="PANTHER" id="PTHR11638:SF18">
    <property type="entry name" value="HEAT SHOCK PROTEIN 104"/>
    <property type="match status" value="1"/>
</dbReference>
<dbReference type="Pfam" id="PF00004">
    <property type="entry name" value="AAA"/>
    <property type="match status" value="1"/>
</dbReference>
<dbReference type="Pfam" id="PF07724">
    <property type="entry name" value="AAA_2"/>
    <property type="match status" value="1"/>
</dbReference>
<dbReference type="Pfam" id="PF17871">
    <property type="entry name" value="AAA_lid_9"/>
    <property type="match status" value="1"/>
</dbReference>
<dbReference type="Pfam" id="PF02861">
    <property type="entry name" value="Clp_N"/>
    <property type="match status" value="2"/>
</dbReference>
<dbReference type="Pfam" id="PF10431">
    <property type="entry name" value="ClpB_D2-small"/>
    <property type="match status" value="1"/>
</dbReference>
<dbReference type="PRINTS" id="PR00300">
    <property type="entry name" value="CLPPROTEASEA"/>
</dbReference>
<dbReference type="SMART" id="SM00382">
    <property type="entry name" value="AAA"/>
    <property type="match status" value="2"/>
</dbReference>
<dbReference type="SMART" id="SM01086">
    <property type="entry name" value="ClpB_D2-small"/>
    <property type="match status" value="1"/>
</dbReference>
<dbReference type="SUPFAM" id="SSF81923">
    <property type="entry name" value="Double Clp-N motif"/>
    <property type="match status" value="1"/>
</dbReference>
<dbReference type="SUPFAM" id="SSF52540">
    <property type="entry name" value="P-loop containing nucleoside triphosphate hydrolases"/>
    <property type="match status" value="2"/>
</dbReference>
<dbReference type="PROSITE" id="PS51903">
    <property type="entry name" value="CLP_R"/>
    <property type="match status" value="1"/>
</dbReference>
<dbReference type="PROSITE" id="PS00870">
    <property type="entry name" value="CLPAB_1"/>
    <property type="match status" value="1"/>
</dbReference>
<dbReference type="PROSITE" id="PS00871">
    <property type="entry name" value="CLPAB_2"/>
    <property type="match status" value="1"/>
</dbReference>